<reference key="1">
    <citation type="submission" date="2009-03" db="EMBL/GenBank/DDBJ databases">
        <title>Brucella melitensis ATCC 23457 whole genome shotgun sequencing project.</title>
        <authorList>
            <person name="Setubal J.C."/>
            <person name="Boyle S."/>
            <person name="Crasta O.R."/>
            <person name="Gillespie J.J."/>
            <person name="Kenyon R.W."/>
            <person name="Lu J."/>
            <person name="Mane S."/>
            <person name="Nagrani S."/>
            <person name="Shallom J.M."/>
            <person name="Shallom S."/>
            <person name="Shukla M."/>
            <person name="Snyder E.E."/>
            <person name="Sobral B.W."/>
            <person name="Wattam A.R."/>
            <person name="Will R."/>
            <person name="Williams K."/>
            <person name="Yoo H."/>
            <person name="Munk C."/>
            <person name="Tapia R."/>
            <person name="Han C."/>
            <person name="Detter J.C."/>
            <person name="Bruce D."/>
            <person name="Brettin T.S."/>
        </authorList>
    </citation>
    <scope>NUCLEOTIDE SEQUENCE [LARGE SCALE GENOMIC DNA]</scope>
    <source>
        <strain>ATCC 23457</strain>
    </source>
</reference>
<gene>
    <name evidence="1" type="primary">trpF</name>
    <name type="ordered locus">BMEA_A2171</name>
</gene>
<dbReference type="EC" id="5.3.1.24" evidence="1"/>
<dbReference type="EMBL" id="CP001488">
    <property type="protein sequence ID" value="ACO01817.1"/>
    <property type="molecule type" value="Genomic_DNA"/>
</dbReference>
<dbReference type="RefSeq" id="WP_002965175.1">
    <property type="nucleotide sequence ID" value="NC_012441.1"/>
</dbReference>
<dbReference type="SMR" id="C0RFZ5"/>
<dbReference type="KEGG" id="bmi:BMEA_A2171"/>
<dbReference type="HOGENOM" id="CLU_076364_1_1_5"/>
<dbReference type="UniPathway" id="UPA00035">
    <property type="reaction ID" value="UER00042"/>
</dbReference>
<dbReference type="Proteomes" id="UP000001748">
    <property type="component" value="Chromosome I"/>
</dbReference>
<dbReference type="GO" id="GO:0004640">
    <property type="term" value="F:phosphoribosylanthranilate isomerase activity"/>
    <property type="evidence" value="ECO:0007669"/>
    <property type="project" value="UniProtKB-UniRule"/>
</dbReference>
<dbReference type="GO" id="GO:0000162">
    <property type="term" value="P:L-tryptophan biosynthetic process"/>
    <property type="evidence" value="ECO:0007669"/>
    <property type="project" value="UniProtKB-UniRule"/>
</dbReference>
<dbReference type="CDD" id="cd00405">
    <property type="entry name" value="PRAI"/>
    <property type="match status" value="1"/>
</dbReference>
<dbReference type="Gene3D" id="3.20.20.70">
    <property type="entry name" value="Aldolase class I"/>
    <property type="match status" value="1"/>
</dbReference>
<dbReference type="HAMAP" id="MF_00135">
    <property type="entry name" value="PRAI"/>
    <property type="match status" value="1"/>
</dbReference>
<dbReference type="InterPro" id="IPR013785">
    <property type="entry name" value="Aldolase_TIM"/>
</dbReference>
<dbReference type="InterPro" id="IPR001240">
    <property type="entry name" value="PRAI_dom"/>
</dbReference>
<dbReference type="InterPro" id="IPR011060">
    <property type="entry name" value="RibuloseP-bd_barrel"/>
</dbReference>
<dbReference type="InterPro" id="IPR044643">
    <property type="entry name" value="TrpF_fam"/>
</dbReference>
<dbReference type="NCBIfam" id="NF002295">
    <property type="entry name" value="PRK01222.1-1"/>
    <property type="match status" value="1"/>
</dbReference>
<dbReference type="PANTHER" id="PTHR42894">
    <property type="entry name" value="N-(5'-PHOSPHORIBOSYL)ANTHRANILATE ISOMERASE"/>
    <property type="match status" value="1"/>
</dbReference>
<dbReference type="PANTHER" id="PTHR42894:SF1">
    <property type="entry name" value="N-(5'-PHOSPHORIBOSYL)ANTHRANILATE ISOMERASE"/>
    <property type="match status" value="1"/>
</dbReference>
<dbReference type="Pfam" id="PF00697">
    <property type="entry name" value="PRAI"/>
    <property type="match status" value="1"/>
</dbReference>
<dbReference type="SUPFAM" id="SSF51366">
    <property type="entry name" value="Ribulose-phoshate binding barrel"/>
    <property type="match status" value="1"/>
</dbReference>
<keyword id="KW-0028">Amino-acid biosynthesis</keyword>
<keyword id="KW-0057">Aromatic amino acid biosynthesis</keyword>
<keyword id="KW-0413">Isomerase</keyword>
<keyword id="KW-0822">Tryptophan biosynthesis</keyword>
<feature type="chain" id="PRO_1000197085" description="N-(5'-phosphoribosyl)anthranilate isomerase">
    <location>
        <begin position="1"/>
        <end position="222"/>
    </location>
</feature>
<organism>
    <name type="scientific">Brucella melitensis biotype 2 (strain ATCC 23457)</name>
    <dbReference type="NCBI Taxonomy" id="546272"/>
    <lineage>
        <taxon>Bacteria</taxon>
        <taxon>Pseudomonadati</taxon>
        <taxon>Pseudomonadota</taxon>
        <taxon>Alphaproteobacteria</taxon>
        <taxon>Hyphomicrobiales</taxon>
        <taxon>Brucellaceae</taxon>
        <taxon>Brucella/Ochrobactrum group</taxon>
        <taxon>Brucella</taxon>
    </lineage>
</organism>
<accession>C0RFZ5</accession>
<evidence type="ECO:0000255" key="1">
    <source>
        <dbReference type="HAMAP-Rule" id="MF_00135"/>
    </source>
</evidence>
<name>TRPF_BRUMB</name>
<comment type="catalytic activity">
    <reaction evidence="1">
        <text>N-(5-phospho-beta-D-ribosyl)anthranilate = 1-(2-carboxyphenylamino)-1-deoxy-D-ribulose 5-phosphate</text>
        <dbReference type="Rhea" id="RHEA:21540"/>
        <dbReference type="ChEBI" id="CHEBI:18277"/>
        <dbReference type="ChEBI" id="CHEBI:58613"/>
        <dbReference type="EC" id="5.3.1.24"/>
    </reaction>
</comment>
<comment type="pathway">
    <text evidence="1">Amino-acid biosynthesis; L-tryptophan biosynthesis; L-tryptophan from chorismate: step 3/5.</text>
</comment>
<comment type="similarity">
    <text evidence="1">Belongs to the TrpF family.</text>
</comment>
<protein>
    <recommendedName>
        <fullName evidence="1">N-(5'-phosphoribosyl)anthranilate isomerase</fullName>
        <shortName evidence="1">PRAI</shortName>
        <ecNumber evidence="1">5.3.1.24</ecNumber>
    </recommendedName>
</protein>
<proteinExistence type="inferred from homology"/>
<sequence length="222" mass="23614">MALDIKICGLKTPEAVAAALDGGATHIGFIFFPKSPRHITPDAAARLRAAATGRAVAVAVTVDADDEALDEIVKTVRPDMLQLHGGETPERVRFLKERYNLPVMKAFSIREAGDLEAIAPYRGIADRFLFDAKPPKGSELPGGNGISFDWNLLAALDADIDYMLSGGLNADNIAEALLKTGAPGIDISSGVECAPGEKDVRLIENFFQAVADANAQPFARRA</sequence>